<gene>
    <name evidence="1" type="primary">pyrD</name>
    <name type="ordered locus">NGR_c01810</name>
</gene>
<name>PYRD_SINFN</name>
<feature type="chain" id="PRO_1000195086" description="Dihydroorotate dehydrogenase (quinone)">
    <location>
        <begin position="1"/>
        <end position="362"/>
    </location>
</feature>
<feature type="active site" description="Nucleophile" evidence="1">
    <location>
        <position position="173"/>
    </location>
</feature>
<feature type="binding site" evidence="1">
    <location>
        <begin position="62"/>
        <end position="66"/>
    </location>
    <ligand>
        <name>FMN</name>
        <dbReference type="ChEBI" id="CHEBI:58210"/>
    </ligand>
</feature>
<feature type="binding site" evidence="1">
    <location>
        <position position="66"/>
    </location>
    <ligand>
        <name>substrate</name>
    </ligand>
</feature>
<feature type="binding site" evidence="1">
    <location>
        <position position="86"/>
    </location>
    <ligand>
        <name>FMN</name>
        <dbReference type="ChEBI" id="CHEBI:58210"/>
    </ligand>
</feature>
<feature type="binding site" evidence="1">
    <location>
        <begin position="111"/>
        <end position="115"/>
    </location>
    <ligand>
        <name>substrate</name>
    </ligand>
</feature>
<feature type="binding site" evidence="1">
    <location>
        <position position="139"/>
    </location>
    <ligand>
        <name>FMN</name>
        <dbReference type="ChEBI" id="CHEBI:58210"/>
    </ligand>
</feature>
<feature type="binding site" evidence="1">
    <location>
        <position position="170"/>
    </location>
    <ligand>
        <name>FMN</name>
        <dbReference type="ChEBI" id="CHEBI:58210"/>
    </ligand>
</feature>
<feature type="binding site" evidence="1">
    <location>
        <position position="170"/>
    </location>
    <ligand>
        <name>substrate</name>
    </ligand>
</feature>
<feature type="binding site" evidence="1">
    <location>
        <position position="175"/>
    </location>
    <ligand>
        <name>substrate</name>
    </ligand>
</feature>
<feature type="binding site" evidence="1">
    <location>
        <position position="215"/>
    </location>
    <ligand>
        <name>FMN</name>
        <dbReference type="ChEBI" id="CHEBI:58210"/>
    </ligand>
</feature>
<feature type="binding site" evidence="1">
    <location>
        <position position="243"/>
    </location>
    <ligand>
        <name>FMN</name>
        <dbReference type="ChEBI" id="CHEBI:58210"/>
    </ligand>
</feature>
<feature type="binding site" evidence="1">
    <location>
        <begin position="244"/>
        <end position="245"/>
    </location>
    <ligand>
        <name>substrate</name>
    </ligand>
</feature>
<feature type="binding site" evidence="1">
    <location>
        <position position="266"/>
    </location>
    <ligand>
        <name>FMN</name>
        <dbReference type="ChEBI" id="CHEBI:58210"/>
    </ligand>
</feature>
<feature type="binding site" evidence="1">
    <location>
        <position position="295"/>
    </location>
    <ligand>
        <name>FMN</name>
        <dbReference type="ChEBI" id="CHEBI:58210"/>
    </ligand>
</feature>
<feature type="binding site" evidence="1">
    <location>
        <begin position="316"/>
        <end position="317"/>
    </location>
    <ligand>
        <name>FMN</name>
        <dbReference type="ChEBI" id="CHEBI:58210"/>
    </ligand>
</feature>
<sequence length="362" mass="38704">MTGPLERLARRGLFLLDPETAHGVSIKALKSGVVPSCAAPADTRLEQVIAGLNFPNPLGMAAGYDKNAEVPEALLRLGFGFTEIGTVTPRPQAGNDKPRIFRLVEDEAVINRLGFNNDGHGAALARLQACSRQALIGVNIGANKDSADRIADYVAGIRTFYAVARYFTANISSPNTPGLRDLQARESLAALLSAVLAARDEEAAKTGRRVPVFLKIAPDLTEEGMDDIAAEVLAHNLDGLIVSNTTLARDGLRDQRQAKEAGGLSGRPLFEKSTAVLARMRKRLGPDVPIIGVGGVSSAETAAEKIRAGADLVQLYSCMVYEGPGLPGRIVRGLSQLCDRDKLASIREIRDSRLDYWAGRNV</sequence>
<evidence type="ECO:0000255" key="1">
    <source>
        <dbReference type="HAMAP-Rule" id="MF_00225"/>
    </source>
</evidence>
<accession>C3MFT0</accession>
<protein>
    <recommendedName>
        <fullName evidence="1">Dihydroorotate dehydrogenase (quinone)</fullName>
        <ecNumber evidence="1">1.3.5.2</ecNumber>
    </recommendedName>
    <alternativeName>
        <fullName evidence="1">DHOdehase</fullName>
        <shortName evidence="1">DHOD</shortName>
        <shortName evidence="1">DHODase</shortName>
    </alternativeName>
    <alternativeName>
        <fullName evidence="1">Dihydroorotate oxidase</fullName>
    </alternativeName>
</protein>
<organism>
    <name type="scientific">Sinorhizobium fredii (strain NBRC 101917 / NGR234)</name>
    <dbReference type="NCBI Taxonomy" id="394"/>
    <lineage>
        <taxon>Bacteria</taxon>
        <taxon>Pseudomonadati</taxon>
        <taxon>Pseudomonadota</taxon>
        <taxon>Alphaproteobacteria</taxon>
        <taxon>Hyphomicrobiales</taxon>
        <taxon>Rhizobiaceae</taxon>
        <taxon>Sinorhizobium/Ensifer group</taxon>
        <taxon>Sinorhizobium</taxon>
    </lineage>
</organism>
<reference key="1">
    <citation type="journal article" date="2009" name="Appl. Environ. Microbiol.">
        <title>Rhizobium sp. strain NGR234 possesses a remarkable number of secretion systems.</title>
        <authorList>
            <person name="Schmeisser C."/>
            <person name="Liesegang H."/>
            <person name="Krysciak D."/>
            <person name="Bakkou N."/>
            <person name="Le Quere A."/>
            <person name="Wollherr A."/>
            <person name="Heinemeyer I."/>
            <person name="Morgenstern B."/>
            <person name="Pommerening-Roeser A."/>
            <person name="Flores M."/>
            <person name="Palacios R."/>
            <person name="Brenner S."/>
            <person name="Gottschalk G."/>
            <person name="Schmitz R.A."/>
            <person name="Broughton W.J."/>
            <person name="Perret X."/>
            <person name="Strittmatter A.W."/>
            <person name="Streit W.R."/>
        </authorList>
    </citation>
    <scope>NUCLEOTIDE SEQUENCE [LARGE SCALE GENOMIC DNA]</scope>
    <source>
        <strain>NBRC 101917 / NGR234</strain>
    </source>
</reference>
<proteinExistence type="inferred from homology"/>
<dbReference type="EC" id="1.3.5.2" evidence="1"/>
<dbReference type="EMBL" id="CP001389">
    <property type="protein sequence ID" value="ACP23981.1"/>
    <property type="molecule type" value="Genomic_DNA"/>
</dbReference>
<dbReference type="RefSeq" id="WP_012706766.1">
    <property type="nucleotide sequence ID" value="NC_012587.1"/>
</dbReference>
<dbReference type="RefSeq" id="YP_002824734.1">
    <property type="nucleotide sequence ID" value="NC_012587.1"/>
</dbReference>
<dbReference type="SMR" id="C3MFT0"/>
<dbReference type="STRING" id="394.NGR_c01810"/>
<dbReference type="KEGG" id="rhi:NGR_c01810"/>
<dbReference type="PATRIC" id="fig|394.7.peg.2976"/>
<dbReference type="eggNOG" id="COG0167">
    <property type="taxonomic scope" value="Bacteria"/>
</dbReference>
<dbReference type="HOGENOM" id="CLU_013640_2_1_5"/>
<dbReference type="OrthoDB" id="9802377at2"/>
<dbReference type="UniPathway" id="UPA00070">
    <property type="reaction ID" value="UER00946"/>
</dbReference>
<dbReference type="Proteomes" id="UP000001054">
    <property type="component" value="Chromosome"/>
</dbReference>
<dbReference type="GO" id="GO:0005737">
    <property type="term" value="C:cytoplasm"/>
    <property type="evidence" value="ECO:0007669"/>
    <property type="project" value="InterPro"/>
</dbReference>
<dbReference type="GO" id="GO:0005886">
    <property type="term" value="C:plasma membrane"/>
    <property type="evidence" value="ECO:0007669"/>
    <property type="project" value="UniProtKB-SubCell"/>
</dbReference>
<dbReference type="GO" id="GO:0106430">
    <property type="term" value="F:dihydroorotate dehydrogenase (quinone) activity"/>
    <property type="evidence" value="ECO:0007669"/>
    <property type="project" value="UniProtKB-EC"/>
</dbReference>
<dbReference type="GO" id="GO:0006207">
    <property type="term" value="P:'de novo' pyrimidine nucleobase biosynthetic process"/>
    <property type="evidence" value="ECO:0007669"/>
    <property type="project" value="InterPro"/>
</dbReference>
<dbReference type="GO" id="GO:0044205">
    <property type="term" value="P:'de novo' UMP biosynthetic process"/>
    <property type="evidence" value="ECO:0007669"/>
    <property type="project" value="UniProtKB-UniRule"/>
</dbReference>
<dbReference type="CDD" id="cd04738">
    <property type="entry name" value="DHOD_2_like"/>
    <property type="match status" value="1"/>
</dbReference>
<dbReference type="Gene3D" id="3.20.20.70">
    <property type="entry name" value="Aldolase class I"/>
    <property type="match status" value="1"/>
</dbReference>
<dbReference type="HAMAP" id="MF_00225">
    <property type="entry name" value="DHO_dh_type2"/>
    <property type="match status" value="1"/>
</dbReference>
<dbReference type="InterPro" id="IPR013785">
    <property type="entry name" value="Aldolase_TIM"/>
</dbReference>
<dbReference type="InterPro" id="IPR050074">
    <property type="entry name" value="DHO_dehydrogenase"/>
</dbReference>
<dbReference type="InterPro" id="IPR005719">
    <property type="entry name" value="Dihydroorotate_DH_2"/>
</dbReference>
<dbReference type="InterPro" id="IPR005720">
    <property type="entry name" value="Dihydroorotate_DH_cat"/>
</dbReference>
<dbReference type="InterPro" id="IPR001295">
    <property type="entry name" value="Dihydroorotate_DH_CS"/>
</dbReference>
<dbReference type="NCBIfam" id="NF003645">
    <property type="entry name" value="PRK05286.1-2"/>
    <property type="match status" value="1"/>
</dbReference>
<dbReference type="NCBIfam" id="NF003652">
    <property type="entry name" value="PRK05286.2-5"/>
    <property type="match status" value="1"/>
</dbReference>
<dbReference type="NCBIfam" id="TIGR01036">
    <property type="entry name" value="pyrD_sub2"/>
    <property type="match status" value="1"/>
</dbReference>
<dbReference type="PANTHER" id="PTHR48109:SF4">
    <property type="entry name" value="DIHYDROOROTATE DEHYDROGENASE (QUINONE), MITOCHONDRIAL"/>
    <property type="match status" value="1"/>
</dbReference>
<dbReference type="PANTHER" id="PTHR48109">
    <property type="entry name" value="DIHYDROOROTATE DEHYDROGENASE (QUINONE), MITOCHONDRIAL-RELATED"/>
    <property type="match status" value="1"/>
</dbReference>
<dbReference type="Pfam" id="PF01180">
    <property type="entry name" value="DHO_dh"/>
    <property type="match status" value="1"/>
</dbReference>
<dbReference type="SUPFAM" id="SSF51395">
    <property type="entry name" value="FMN-linked oxidoreductases"/>
    <property type="match status" value="1"/>
</dbReference>
<dbReference type="PROSITE" id="PS00911">
    <property type="entry name" value="DHODEHASE_1"/>
    <property type="match status" value="1"/>
</dbReference>
<dbReference type="PROSITE" id="PS00912">
    <property type="entry name" value="DHODEHASE_2"/>
    <property type="match status" value="1"/>
</dbReference>
<keyword id="KW-1003">Cell membrane</keyword>
<keyword id="KW-0285">Flavoprotein</keyword>
<keyword id="KW-0288">FMN</keyword>
<keyword id="KW-0472">Membrane</keyword>
<keyword id="KW-0560">Oxidoreductase</keyword>
<keyword id="KW-0665">Pyrimidine biosynthesis</keyword>
<keyword id="KW-1185">Reference proteome</keyword>
<comment type="function">
    <text evidence="1">Catalyzes the conversion of dihydroorotate to orotate with quinone as electron acceptor.</text>
</comment>
<comment type="catalytic activity">
    <reaction evidence="1">
        <text>(S)-dihydroorotate + a quinone = orotate + a quinol</text>
        <dbReference type="Rhea" id="RHEA:30187"/>
        <dbReference type="ChEBI" id="CHEBI:24646"/>
        <dbReference type="ChEBI" id="CHEBI:30839"/>
        <dbReference type="ChEBI" id="CHEBI:30864"/>
        <dbReference type="ChEBI" id="CHEBI:132124"/>
        <dbReference type="EC" id="1.3.5.2"/>
    </reaction>
</comment>
<comment type="cofactor">
    <cofactor evidence="1">
        <name>FMN</name>
        <dbReference type="ChEBI" id="CHEBI:58210"/>
    </cofactor>
    <text evidence="1">Binds 1 FMN per subunit.</text>
</comment>
<comment type="pathway">
    <text evidence="1">Pyrimidine metabolism; UMP biosynthesis via de novo pathway; orotate from (S)-dihydroorotate (quinone route): step 1/1.</text>
</comment>
<comment type="subunit">
    <text evidence="1">Monomer.</text>
</comment>
<comment type="subcellular location">
    <subcellularLocation>
        <location evidence="1">Cell membrane</location>
        <topology evidence="1">Peripheral membrane protein</topology>
    </subcellularLocation>
</comment>
<comment type="similarity">
    <text evidence="1">Belongs to the dihydroorotate dehydrogenase family. Type 2 subfamily.</text>
</comment>